<organism>
    <name type="scientific">Shewanella loihica (strain ATCC BAA-1088 / PV-4)</name>
    <dbReference type="NCBI Taxonomy" id="323850"/>
    <lineage>
        <taxon>Bacteria</taxon>
        <taxon>Pseudomonadati</taxon>
        <taxon>Pseudomonadota</taxon>
        <taxon>Gammaproteobacteria</taxon>
        <taxon>Alteromonadales</taxon>
        <taxon>Shewanellaceae</taxon>
        <taxon>Shewanella</taxon>
    </lineage>
</organism>
<sequence length="257" mass="27552">MSDLKKAAQKAIELMDLTTLNDDDTDQKVIELCHKAKTPAGNTAAICIYPRFIPIARKTLNEMGCEEIKIATVTNFPHGNDDIAIAVLETRAAVAYGADEVDVVFPYRALMEGNETVGYELVKACKEACGDDVLLKVIIESGVLQDPALIRKASELSIDAGADFIKTSTGKVEVNATLEAAEIMMTVIAEKNPKVGFKPAGGVRDAAAAEEFLGVAERLLGKGWATPRTFRFGASSLLNNLLHTLELAEAPKGPQGY</sequence>
<comment type="function">
    <text evidence="1">Catalyzes a reversible aldol reaction between acetaldehyde and D-glyceraldehyde 3-phosphate to generate 2-deoxy-D-ribose 5-phosphate.</text>
</comment>
<comment type="catalytic activity">
    <reaction evidence="1">
        <text>2-deoxy-D-ribose 5-phosphate = D-glyceraldehyde 3-phosphate + acetaldehyde</text>
        <dbReference type="Rhea" id="RHEA:12821"/>
        <dbReference type="ChEBI" id="CHEBI:15343"/>
        <dbReference type="ChEBI" id="CHEBI:59776"/>
        <dbReference type="ChEBI" id="CHEBI:62877"/>
        <dbReference type="EC" id="4.1.2.4"/>
    </reaction>
</comment>
<comment type="pathway">
    <text evidence="1">Carbohydrate degradation; 2-deoxy-D-ribose 1-phosphate degradation; D-glyceraldehyde 3-phosphate and acetaldehyde from 2-deoxy-alpha-D-ribose 1-phosphate: step 2/2.</text>
</comment>
<comment type="subcellular location">
    <subcellularLocation>
        <location evidence="1">Cytoplasm</location>
    </subcellularLocation>
</comment>
<comment type="similarity">
    <text evidence="1">Belongs to the DeoC/FbaB aldolase family. DeoC type 2 subfamily.</text>
</comment>
<dbReference type="EC" id="4.1.2.4" evidence="1"/>
<dbReference type="EMBL" id="CP000606">
    <property type="protein sequence ID" value="ABO24681.1"/>
    <property type="molecule type" value="Genomic_DNA"/>
</dbReference>
<dbReference type="RefSeq" id="WP_011866612.1">
    <property type="nucleotide sequence ID" value="NC_009092.1"/>
</dbReference>
<dbReference type="SMR" id="A3QGT3"/>
<dbReference type="STRING" id="323850.Shew_2815"/>
<dbReference type="KEGG" id="slo:Shew_2815"/>
<dbReference type="eggNOG" id="COG0274">
    <property type="taxonomic scope" value="Bacteria"/>
</dbReference>
<dbReference type="HOGENOM" id="CLU_053595_3_1_6"/>
<dbReference type="OrthoDB" id="6579831at2"/>
<dbReference type="UniPathway" id="UPA00002">
    <property type="reaction ID" value="UER00468"/>
</dbReference>
<dbReference type="Proteomes" id="UP000001558">
    <property type="component" value="Chromosome"/>
</dbReference>
<dbReference type="GO" id="GO:0005737">
    <property type="term" value="C:cytoplasm"/>
    <property type="evidence" value="ECO:0007669"/>
    <property type="project" value="UniProtKB-SubCell"/>
</dbReference>
<dbReference type="GO" id="GO:0004139">
    <property type="term" value="F:deoxyribose-phosphate aldolase activity"/>
    <property type="evidence" value="ECO:0007669"/>
    <property type="project" value="UniProtKB-UniRule"/>
</dbReference>
<dbReference type="GO" id="GO:0006018">
    <property type="term" value="P:2-deoxyribose 1-phosphate catabolic process"/>
    <property type="evidence" value="ECO:0007669"/>
    <property type="project" value="UniProtKB-UniRule"/>
</dbReference>
<dbReference type="GO" id="GO:0016052">
    <property type="term" value="P:carbohydrate catabolic process"/>
    <property type="evidence" value="ECO:0007669"/>
    <property type="project" value="TreeGrafter"/>
</dbReference>
<dbReference type="GO" id="GO:0009264">
    <property type="term" value="P:deoxyribonucleotide catabolic process"/>
    <property type="evidence" value="ECO:0007669"/>
    <property type="project" value="InterPro"/>
</dbReference>
<dbReference type="CDD" id="cd00959">
    <property type="entry name" value="DeoC"/>
    <property type="match status" value="1"/>
</dbReference>
<dbReference type="Gene3D" id="3.20.20.70">
    <property type="entry name" value="Aldolase class I"/>
    <property type="match status" value="1"/>
</dbReference>
<dbReference type="HAMAP" id="MF_00592">
    <property type="entry name" value="DeoC_type2"/>
    <property type="match status" value="1"/>
</dbReference>
<dbReference type="InterPro" id="IPR013785">
    <property type="entry name" value="Aldolase_TIM"/>
</dbReference>
<dbReference type="InterPro" id="IPR011343">
    <property type="entry name" value="DeoC"/>
</dbReference>
<dbReference type="InterPro" id="IPR002915">
    <property type="entry name" value="DeoC/FbaB/LacD_aldolase"/>
</dbReference>
<dbReference type="InterPro" id="IPR023649">
    <property type="entry name" value="DeoC_typeII"/>
</dbReference>
<dbReference type="NCBIfam" id="TIGR00126">
    <property type="entry name" value="deoC"/>
    <property type="match status" value="1"/>
</dbReference>
<dbReference type="PANTHER" id="PTHR10889">
    <property type="entry name" value="DEOXYRIBOSE-PHOSPHATE ALDOLASE"/>
    <property type="match status" value="1"/>
</dbReference>
<dbReference type="PANTHER" id="PTHR10889:SF3">
    <property type="entry name" value="DEOXYRIBOSE-PHOSPHATE ALDOLASE"/>
    <property type="match status" value="1"/>
</dbReference>
<dbReference type="Pfam" id="PF01791">
    <property type="entry name" value="DeoC"/>
    <property type="match status" value="1"/>
</dbReference>
<dbReference type="PIRSF" id="PIRSF001357">
    <property type="entry name" value="DeoC"/>
    <property type="match status" value="1"/>
</dbReference>
<dbReference type="SMART" id="SM01133">
    <property type="entry name" value="DeoC"/>
    <property type="match status" value="1"/>
</dbReference>
<dbReference type="SUPFAM" id="SSF51569">
    <property type="entry name" value="Aldolase"/>
    <property type="match status" value="1"/>
</dbReference>
<keyword id="KW-0963">Cytoplasm</keyword>
<keyword id="KW-0456">Lyase</keyword>
<keyword id="KW-1185">Reference proteome</keyword>
<keyword id="KW-0704">Schiff base</keyword>
<evidence type="ECO:0000255" key="1">
    <source>
        <dbReference type="HAMAP-Rule" id="MF_00592"/>
    </source>
</evidence>
<protein>
    <recommendedName>
        <fullName evidence="1">Deoxyribose-phosphate aldolase</fullName>
        <shortName evidence="1">DERA</shortName>
        <ecNumber evidence="1">4.1.2.4</ecNumber>
    </recommendedName>
    <alternativeName>
        <fullName evidence="1">2-deoxy-D-ribose 5-phosphate aldolase</fullName>
    </alternativeName>
    <alternativeName>
        <fullName evidence="1">Phosphodeoxyriboaldolase</fullName>
        <shortName evidence="1">Deoxyriboaldolase</shortName>
    </alternativeName>
</protein>
<reference key="1">
    <citation type="submission" date="2007-03" db="EMBL/GenBank/DDBJ databases">
        <title>Complete sequence of Shewanella loihica PV-4.</title>
        <authorList>
            <consortium name="US DOE Joint Genome Institute"/>
            <person name="Copeland A."/>
            <person name="Lucas S."/>
            <person name="Lapidus A."/>
            <person name="Barry K."/>
            <person name="Detter J.C."/>
            <person name="Glavina del Rio T."/>
            <person name="Hammon N."/>
            <person name="Israni S."/>
            <person name="Dalin E."/>
            <person name="Tice H."/>
            <person name="Pitluck S."/>
            <person name="Chain P."/>
            <person name="Malfatti S."/>
            <person name="Shin M."/>
            <person name="Vergez L."/>
            <person name="Schmutz J."/>
            <person name="Larimer F."/>
            <person name="Land M."/>
            <person name="Hauser L."/>
            <person name="Kyrpides N."/>
            <person name="Mikhailova N."/>
            <person name="Romine M.F."/>
            <person name="Serres G."/>
            <person name="Fredrickson J."/>
            <person name="Tiedje J."/>
            <person name="Richardson P."/>
        </authorList>
    </citation>
    <scope>NUCLEOTIDE SEQUENCE [LARGE SCALE GENOMIC DNA]</scope>
    <source>
        <strain>ATCC BAA-1088 / PV-4</strain>
    </source>
</reference>
<name>DEOC_SHELP</name>
<accession>A3QGT3</accession>
<feature type="chain" id="PRO_1000072606" description="Deoxyribose-phosphate aldolase">
    <location>
        <begin position="1"/>
        <end position="257"/>
    </location>
</feature>
<feature type="active site" description="Proton donor/acceptor" evidence="1">
    <location>
        <position position="102"/>
    </location>
</feature>
<feature type="active site" description="Schiff-base intermediate with acetaldehyde" evidence="1">
    <location>
        <position position="166"/>
    </location>
</feature>
<feature type="active site" description="Proton donor/acceptor" evidence="1">
    <location>
        <position position="198"/>
    </location>
</feature>
<proteinExistence type="inferred from homology"/>
<gene>
    <name evidence="1" type="primary">deoC</name>
    <name type="ordered locus">Shew_2815</name>
</gene>